<comment type="function">
    <text evidence="4 5 6">Inhibitor-type lectin that may regulate the correct polymerization of BGLU23/PYK10 upon tissue damage. Activates BGLU21, BGLU22 and BGLU23.</text>
</comment>
<comment type="subunit">
    <text evidence="5">Component of the PYK10 complex, at least composed of PYK10/BGLU23, BGLU21, BGLU22, JAL22, JAL23, PBP1/JAL30, PBP2/JAL31, JAL32, JAL33, JAL34, JAL35, GLL22 and GLL23.</text>
</comment>
<comment type="subcellular location">
    <subcellularLocation>
        <location evidence="4">Cytoplasm</location>
    </subcellularLocation>
</comment>
<comment type="alternative products">
    <event type="alternative splicing"/>
    <isoform>
        <id>O04314-1</id>
        <name>1</name>
        <sequence type="displayed"/>
    </isoform>
    <isoform>
        <id>O04314-2</id>
        <name>2</name>
        <sequence type="described" ref="VSP_046471"/>
    </isoform>
</comment>
<comment type="tissue specificity">
    <text evidence="6">Expressed exclusively in roots.</text>
</comment>
<comment type="induction">
    <text evidence="3">Induced by NAI1 (at protein level).</text>
</comment>
<comment type="disruption phenotype">
    <text evidence="4">Reduced tissue damage-mediated BGLU23/PYK10 activation. Larger PYK10 complexes.</text>
</comment>
<comment type="similarity">
    <text evidence="2 8">Belongs to the jacalin lectin family.</text>
</comment>
<comment type="caution">
    <text evidence="8">PubMed:18467340 shows that PBP1 inhibits polymerization of PYK10 complex, while in PubMed:19965874, PBP1 activates purified PYK10.</text>
</comment>
<gene>
    <name type="primary">PBP1</name>
    <name type="synonym">JAL30</name>
    <name type="synonym">JIP</name>
    <name type="synonym">PBPI</name>
    <name type="ordered locus">At3g16420</name>
    <name type="ORF">MDC8.5</name>
    <name type="ORF">T02O04.8</name>
</gene>
<proteinExistence type="evidence at protein level"/>
<reference key="1">
    <citation type="journal article" date="2000" name="DNA Res.">
        <title>Structural analysis of Arabidopsis thaliana chromosome 3. II. Sequence features of the 4,251,695 bp regions covered by 90 P1, TAC and BAC clones.</title>
        <authorList>
            <person name="Kaneko T."/>
            <person name="Katoh T."/>
            <person name="Sato S."/>
            <person name="Nakamura Y."/>
            <person name="Asamizu E."/>
            <person name="Tabata S."/>
        </authorList>
    </citation>
    <scope>NUCLEOTIDE SEQUENCE [LARGE SCALE GENOMIC DNA]</scope>
    <source>
        <strain>cv. Columbia</strain>
    </source>
</reference>
<reference key="2">
    <citation type="journal article" date="2000" name="Nature">
        <title>Sequence and analysis of chromosome 3 of the plant Arabidopsis thaliana.</title>
        <authorList>
            <person name="Salanoubat M."/>
            <person name="Lemcke K."/>
            <person name="Rieger M."/>
            <person name="Ansorge W."/>
            <person name="Unseld M."/>
            <person name="Fartmann B."/>
            <person name="Valle G."/>
            <person name="Bloecker H."/>
            <person name="Perez-Alonso M."/>
            <person name="Obermaier B."/>
            <person name="Delseny M."/>
            <person name="Boutry M."/>
            <person name="Grivell L.A."/>
            <person name="Mache R."/>
            <person name="Puigdomenech P."/>
            <person name="De Simone V."/>
            <person name="Choisne N."/>
            <person name="Artiguenave F."/>
            <person name="Robert C."/>
            <person name="Brottier P."/>
            <person name="Wincker P."/>
            <person name="Cattolico L."/>
            <person name="Weissenbach J."/>
            <person name="Saurin W."/>
            <person name="Quetier F."/>
            <person name="Schaefer M."/>
            <person name="Mueller-Auer S."/>
            <person name="Gabel C."/>
            <person name="Fuchs M."/>
            <person name="Benes V."/>
            <person name="Wurmbach E."/>
            <person name="Drzonek H."/>
            <person name="Erfle H."/>
            <person name="Jordan N."/>
            <person name="Bangert S."/>
            <person name="Wiedelmann R."/>
            <person name="Kranz H."/>
            <person name="Voss H."/>
            <person name="Holland R."/>
            <person name="Brandt P."/>
            <person name="Nyakatura G."/>
            <person name="Vezzi A."/>
            <person name="D'Angelo M."/>
            <person name="Pallavicini A."/>
            <person name="Toppo S."/>
            <person name="Simionati B."/>
            <person name="Conrad A."/>
            <person name="Hornischer K."/>
            <person name="Kauer G."/>
            <person name="Loehnert T.-H."/>
            <person name="Nordsiek G."/>
            <person name="Reichelt J."/>
            <person name="Scharfe M."/>
            <person name="Schoen O."/>
            <person name="Bargues M."/>
            <person name="Terol J."/>
            <person name="Climent J."/>
            <person name="Navarro P."/>
            <person name="Collado C."/>
            <person name="Perez-Perez A."/>
            <person name="Ottenwaelder B."/>
            <person name="Duchemin D."/>
            <person name="Cooke R."/>
            <person name="Laudie M."/>
            <person name="Berger-Llauro C."/>
            <person name="Purnelle B."/>
            <person name="Masuy D."/>
            <person name="de Haan M."/>
            <person name="Maarse A.C."/>
            <person name="Alcaraz J.-P."/>
            <person name="Cottet A."/>
            <person name="Casacuberta E."/>
            <person name="Monfort A."/>
            <person name="Argiriou A."/>
            <person name="Flores M."/>
            <person name="Liguori R."/>
            <person name="Vitale D."/>
            <person name="Mannhaupt G."/>
            <person name="Haase D."/>
            <person name="Schoof H."/>
            <person name="Rudd S."/>
            <person name="Zaccaria P."/>
            <person name="Mewes H.-W."/>
            <person name="Mayer K.F.X."/>
            <person name="Kaul S."/>
            <person name="Town C.D."/>
            <person name="Koo H.L."/>
            <person name="Tallon L.J."/>
            <person name="Jenkins J."/>
            <person name="Rooney T."/>
            <person name="Rizzo M."/>
            <person name="Walts A."/>
            <person name="Utterback T."/>
            <person name="Fujii C.Y."/>
            <person name="Shea T.P."/>
            <person name="Creasy T.H."/>
            <person name="Haas B."/>
            <person name="Maiti R."/>
            <person name="Wu D."/>
            <person name="Peterson J."/>
            <person name="Van Aken S."/>
            <person name="Pai G."/>
            <person name="Militscher J."/>
            <person name="Sellers P."/>
            <person name="Gill J.E."/>
            <person name="Feldblyum T.V."/>
            <person name="Preuss D."/>
            <person name="Lin X."/>
            <person name="Nierman W.C."/>
            <person name="Salzberg S.L."/>
            <person name="White O."/>
            <person name="Venter J.C."/>
            <person name="Fraser C.M."/>
            <person name="Kaneko T."/>
            <person name="Nakamura Y."/>
            <person name="Sato S."/>
            <person name="Kato T."/>
            <person name="Asamizu E."/>
            <person name="Sasamoto S."/>
            <person name="Kimura T."/>
            <person name="Idesawa K."/>
            <person name="Kawashima K."/>
            <person name="Kishida Y."/>
            <person name="Kiyokawa C."/>
            <person name="Kohara M."/>
            <person name="Matsumoto M."/>
            <person name="Matsuno A."/>
            <person name="Muraki A."/>
            <person name="Nakayama S."/>
            <person name="Nakazaki N."/>
            <person name="Shinpo S."/>
            <person name="Takeuchi C."/>
            <person name="Wada T."/>
            <person name="Watanabe A."/>
            <person name="Yamada M."/>
            <person name="Yasuda M."/>
            <person name="Tabata S."/>
        </authorList>
    </citation>
    <scope>NUCLEOTIDE SEQUENCE [LARGE SCALE GENOMIC DNA]</scope>
    <source>
        <strain>cv. Columbia</strain>
    </source>
</reference>
<reference key="3">
    <citation type="journal article" date="2017" name="Plant J.">
        <title>Araport11: a complete reannotation of the Arabidopsis thaliana reference genome.</title>
        <authorList>
            <person name="Cheng C.Y."/>
            <person name="Krishnakumar V."/>
            <person name="Chan A.P."/>
            <person name="Thibaud-Nissen F."/>
            <person name="Schobel S."/>
            <person name="Town C.D."/>
        </authorList>
    </citation>
    <scope>GENOME REANNOTATION</scope>
    <source>
        <strain>cv. Columbia</strain>
    </source>
</reference>
<reference key="4">
    <citation type="journal article" date="2003" name="Science">
        <title>Empirical analysis of transcriptional activity in the Arabidopsis genome.</title>
        <authorList>
            <person name="Yamada K."/>
            <person name="Lim J."/>
            <person name="Dale J.M."/>
            <person name="Chen H."/>
            <person name="Shinn P."/>
            <person name="Palm C.J."/>
            <person name="Southwick A.M."/>
            <person name="Wu H.C."/>
            <person name="Kim C.J."/>
            <person name="Nguyen M."/>
            <person name="Pham P.K."/>
            <person name="Cheuk R.F."/>
            <person name="Karlin-Newmann G."/>
            <person name="Liu S.X."/>
            <person name="Lam B."/>
            <person name="Sakano H."/>
            <person name="Wu T."/>
            <person name="Yu G."/>
            <person name="Miranda M."/>
            <person name="Quach H.L."/>
            <person name="Tripp M."/>
            <person name="Chang C.H."/>
            <person name="Lee J.M."/>
            <person name="Toriumi M.J."/>
            <person name="Chan M.M."/>
            <person name="Tang C.C."/>
            <person name="Onodera C.S."/>
            <person name="Deng J.M."/>
            <person name="Akiyama K."/>
            <person name="Ansari Y."/>
            <person name="Arakawa T."/>
            <person name="Banh J."/>
            <person name="Banno F."/>
            <person name="Bowser L."/>
            <person name="Brooks S.Y."/>
            <person name="Carninci P."/>
            <person name="Chao Q."/>
            <person name="Choy N."/>
            <person name="Enju A."/>
            <person name="Goldsmith A.D."/>
            <person name="Gurjal M."/>
            <person name="Hansen N.F."/>
            <person name="Hayashizaki Y."/>
            <person name="Johnson-Hopson C."/>
            <person name="Hsuan V.W."/>
            <person name="Iida K."/>
            <person name="Karnes M."/>
            <person name="Khan S."/>
            <person name="Koesema E."/>
            <person name="Ishida J."/>
            <person name="Jiang P.X."/>
            <person name="Jones T."/>
            <person name="Kawai J."/>
            <person name="Kamiya A."/>
            <person name="Meyers C."/>
            <person name="Nakajima M."/>
            <person name="Narusaka M."/>
            <person name="Seki M."/>
            <person name="Sakurai T."/>
            <person name="Satou M."/>
            <person name="Tamse R."/>
            <person name="Vaysberg M."/>
            <person name="Wallender E.K."/>
            <person name="Wong C."/>
            <person name="Yamamura Y."/>
            <person name="Yuan S."/>
            <person name="Shinozaki K."/>
            <person name="Davis R.W."/>
            <person name="Theologis A."/>
            <person name="Ecker J.R."/>
        </authorList>
    </citation>
    <scope>NUCLEOTIDE SEQUENCE [LARGE SCALE MRNA] (ISOFORM 1)</scope>
    <source>
        <strain>cv. Columbia</strain>
    </source>
</reference>
<reference key="5">
    <citation type="journal article" date="2009" name="DNA Res.">
        <title>Analysis of multiple occurrences of alternative splicing events in Arabidopsis thaliana using novel sequenced full-length cDNAs.</title>
        <authorList>
            <person name="Iida K."/>
            <person name="Fukami-Kobayashi K."/>
            <person name="Toyoda A."/>
            <person name="Sakaki Y."/>
            <person name="Kobayashi M."/>
            <person name="Seki M."/>
            <person name="Shinozaki K."/>
        </authorList>
    </citation>
    <scope>NUCLEOTIDE SEQUENCE [LARGE SCALE MRNA] (ISOFORM 2)</scope>
    <source>
        <strain>cv. Columbia</strain>
    </source>
</reference>
<reference key="6">
    <citation type="submission" date="2002-03" db="EMBL/GenBank/DDBJ databases">
        <title>Full-length cDNA from Arabidopsis thaliana.</title>
        <authorList>
            <person name="Brover V.V."/>
            <person name="Troukhan M.E."/>
            <person name="Alexandrov N.A."/>
            <person name="Lu Y.-P."/>
            <person name="Flavell R.B."/>
            <person name="Feldmann K.A."/>
        </authorList>
    </citation>
    <scope>NUCLEOTIDE SEQUENCE [LARGE SCALE MRNA] (ISOFORM 1)</scope>
</reference>
<reference key="7">
    <citation type="journal article" date="2004" name="Plant Cell">
        <title>NAI1 gene encodes a basic-helix-loop-helix-type putative transcription factor that regulates the formation of an endoplasmic reticulum-derived structure, the ER body.</title>
        <authorList>
            <person name="Matsushima R."/>
            <person name="Fukao Y."/>
            <person name="Nishimura M."/>
            <person name="Hara-Nishimura I."/>
        </authorList>
    </citation>
    <scope>IDENTIFICATION BY MASS SPECTROMETRY</scope>
    <scope>INDUCTION BY NAI1</scope>
</reference>
<reference key="8">
    <citation type="journal article" date="2005" name="Plant Cell Physiol.">
        <title>Activation of an ER-body-localized beta-glucosidase via a cytosolic binding partner in damaged tissues of Arabidopsis thaliana.</title>
        <authorList>
            <person name="Nagano A.J."/>
            <person name="Matsushima R."/>
            <person name="Hara-Nishimura I."/>
        </authorList>
    </citation>
    <scope>FUNCTION</scope>
    <scope>DISRUPTION PHENOTYPE</scope>
    <scope>SUBCELLULAR LOCATION</scope>
    <scope>INTERACTION WITH BGLU23/PYK10</scope>
    <source>
        <strain>cv. Columbia</strain>
    </source>
</reference>
<reference key="9">
    <citation type="journal article" date="2008" name="Plant Cell Physiol.">
        <title>Antagonistic jacalin-related lectins regulate the size of ER body-type beta-glucosidase complexes in Arabidopsis thaliana.</title>
        <authorList>
            <person name="Nagano A.J."/>
            <person name="Fukao Y."/>
            <person name="Fujiwara M."/>
            <person name="Nishimura M."/>
            <person name="Hara-Nishimura I."/>
        </authorList>
    </citation>
    <scope>FUNCTION</scope>
    <scope>IDENTIFICATION IN THE PYK10 COMPLEX</scope>
    <scope>GENE FAMILY</scope>
    <scope>NOMENCLATURE</scope>
</reference>
<reference key="10">
    <citation type="journal article" date="2010" name="Plant Cell Physiol.">
        <title>Scopolin-hydrolyzing beta-glucosidases in roots of Arabidopsis.</title>
        <authorList>
            <person name="Ahn Y.O."/>
            <person name="Shimizu B."/>
            <person name="Sakata K."/>
            <person name="Gantulga D."/>
            <person name="Zhou C."/>
            <person name="Zhou Z."/>
            <person name="Bevan D.R."/>
            <person name="Esen A."/>
        </authorList>
    </citation>
    <scope>FUNCTION</scope>
    <scope>TISSUE SPECIFICITY</scope>
</reference>
<reference key="11">
    <citation type="journal article" date="2012" name="J. Proteome Res.">
        <title>Identification of phosphoproteins in Arabidopsis thaliana leaves using polyethylene glycol fractionation, immobilized metal-ion affinity chromatography, two-dimensional gel electrophoresis and mass spectrometry.</title>
        <authorList>
            <person name="Aryal U.K."/>
            <person name="Krochko J.E."/>
            <person name="Ross A.R."/>
        </authorList>
    </citation>
    <scope>PHOSPHORYLATION [LARGE SCALE ANALYSIS] AT SER-20</scope>
    <scope>IDENTIFICATION BY MASS SPECTROMETRY [LARGE SCALE ANALYSIS]</scope>
</reference>
<reference key="12">
    <citation type="journal article" date="2012" name="PLoS ONE">
        <title>ERMO3/MVP1/GOLD36 is involved in a cell type-specific mechanism for maintaining ER morphology in Arabidopsis thaliana.</title>
        <authorList>
            <person name="Nakano R.T."/>
            <person name="Matsushima R."/>
            <person name="Nagano A.J."/>
            <person name="Fukao Y."/>
            <person name="Fujiwara M."/>
            <person name="Kondo M."/>
            <person name="Nishimura M."/>
            <person name="Hara-Nishimura I."/>
        </authorList>
    </citation>
    <scope>INTERACTION WITH BGLU23/PYK10</scope>
</reference>
<feature type="initiator methionine" description="Removed" evidence="1">
    <location>
        <position position="1"/>
    </location>
</feature>
<feature type="chain" id="PRO_0000422166" description="PYK10-binding protein 1">
    <location>
        <begin position="2"/>
        <end position="298"/>
    </location>
</feature>
<feature type="domain" description="Jacalin-type lectin 1" evidence="2">
    <location>
        <begin position="2"/>
        <end position="142"/>
    </location>
</feature>
<feature type="domain" description="Jacalin-type lectin 2" evidence="2">
    <location>
        <begin position="152"/>
        <end position="295"/>
    </location>
</feature>
<feature type="modified residue" description="N-acetylalanine" evidence="1">
    <location>
        <position position="2"/>
    </location>
</feature>
<feature type="modified residue" description="Phosphoserine" evidence="9">
    <location>
        <position position="20"/>
    </location>
</feature>
<feature type="splice variant" id="VSP_046471" description="In isoform 2." evidence="7">
    <location>
        <begin position="87"/>
        <end position="108"/>
    </location>
</feature>
<feature type="sequence conflict" description="In Ref. 6; AAM65935." evidence="8" ref="6">
    <original>I</original>
    <variation>V</variation>
    <location>
        <position position="93"/>
    </location>
</feature>
<feature type="sequence conflict" description="In Ref. 6; AAM65935." evidence="8" ref="6">
    <original>V</original>
    <variation>A</variation>
    <location>
        <position position="165"/>
    </location>
</feature>
<dbReference type="EMBL" id="AP000373">
    <property type="protein sequence ID" value="BAB01141.1"/>
    <property type="molecule type" value="Genomic_DNA"/>
</dbReference>
<dbReference type="EMBL" id="AC001645">
    <property type="protein sequence ID" value="AAB63635.1"/>
    <property type="molecule type" value="Genomic_DNA"/>
</dbReference>
<dbReference type="EMBL" id="CP002686">
    <property type="protein sequence ID" value="AEE75810.1"/>
    <property type="molecule type" value="Genomic_DNA"/>
</dbReference>
<dbReference type="EMBL" id="CP002686">
    <property type="protein sequence ID" value="AEE75811.1"/>
    <property type="molecule type" value="Genomic_DNA"/>
</dbReference>
<dbReference type="EMBL" id="CP002686">
    <property type="protein sequence ID" value="AEE75812.1"/>
    <property type="molecule type" value="Genomic_DNA"/>
</dbReference>
<dbReference type="EMBL" id="AF370488">
    <property type="protein sequence ID" value="AAK43865.1"/>
    <property type="molecule type" value="mRNA"/>
</dbReference>
<dbReference type="EMBL" id="AY064653">
    <property type="protein sequence ID" value="AAL47364.1"/>
    <property type="molecule type" value="mRNA"/>
</dbReference>
<dbReference type="EMBL" id="AY065189">
    <property type="protein sequence ID" value="AAL38365.1"/>
    <property type="molecule type" value="mRNA"/>
</dbReference>
<dbReference type="EMBL" id="AY128360">
    <property type="protein sequence ID" value="AAM91563.1"/>
    <property type="molecule type" value="mRNA"/>
</dbReference>
<dbReference type="EMBL" id="BT000021">
    <property type="protein sequence ID" value="AAN15340.1"/>
    <property type="molecule type" value="mRNA"/>
</dbReference>
<dbReference type="EMBL" id="BT002196">
    <property type="protein sequence ID" value="AAN72207.1"/>
    <property type="molecule type" value="mRNA"/>
</dbReference>
<dbReference type="EMBL" id="AK319056">
    <property type="protein sequence ID" value="BAH57171.1"/>
    <property type="molecule type" value="mRNA"/>
</dbReference>
<dbReference type="EMBL" id="AY088397">
    <property type="protein sequence ID" value="AAM65935.1"/>
    <property type="molecule type" value="mRNA"/>
</dbReference>
<dbReference type="RefSeq" id="NP_001030710.1">
    <molecule id="O04314-1"/>
    <property type="nucleotide sequence ID" value="NM_001035633.1"/>
</dbReference>
<dbReference type="RefSeq" id="NP_188263.1">
    <molecule id="O04314-1"/>
    <property type="nucleotide sequence ID" value="NM_112513.3"/>
</dbReference>
<dbReference type="RefSeq" id="NP_850594.1">
    <molecule id="O04314-1"/>
    <property type="nucleotide sequence ID" value="NM_180263.2"/>
</dbReference>
<dbReference type="SMR" id="O04314"/>
<dbReference type="BioGRID" id="6224">
    <property type="interactions" value="2"/>
</dbReference>
<dbReference type="FunCoup" id="O04314">
    <property type="interactions" value="25"/>
</dbReference>
<dbReference type="STRING" id="3702.O04314"/>
<dbReference type="iPTMnet" id="O04314"/>
<dbReference type="PaxDb" id="3702-AT3G16420.1"/>
<dbReference type="ProteomicsDB" id="250660">
    <molecule id="O04314-1"/>
</dbReference>
<dbReference type="EnsemblPlants" id="AT3G16420.1">
    <molecule id="O04314-1"/>
    <property type="protein sequence ID" value="AT3G16420.1"/>
    <property type="gene ID" value="AT3G16420"/>
</dbReference>
<dbReference type="EnsemblPlants" id="AT3G16420.2">
    <molecule id="O04314-1"/>
    <property type="protein sequence ID" value="AT3G16420.2"/>
    <property type="gene ID" value="AT3G16420"/>
</dbReference>
<dbReference type="EnsemblPlants" id="AT3G16420.3">
    <molecule id="O04314-1"/>
    <property type="protein sequence ID" value="AT3G16420.3"/>
    <property type="gene ID" value="AT3G16420"/>
</dbReference>
<dbReference type="GeneID" id="820890"/>
<dbReference type="Gramene" id="AT3G16420.1">
    <molecule id="O04314-1"/>
    <property type="protein sequence ID" value="AT3G16420.1"/>
    <property type="gene ID" value="AT3G16420"/>
</dbReference>
<dbReference type="Gramene" id="AT3G16420.2">
    <molecule id="O04314-1"/>
    <property type="protein sequence ID" value="AT3G16420.2"/>
    <property type="gene ID" value="AT3G16420"/>
</dbReference>
<dbReference type="Gramene" id="AT3G16420.3">
    <molecule id="O04314-1"/>
    <property type="protein sequence ID" value="AT3G16420.3"/>
    <property type="gene ID" value="AT3G16420"/>
</dbReference>
<dbReference type="KEGG" id="ath:AT3G16420"/>
<dbReference type="Araport" id="AT3G16420"/>
<dbReference type="TAIR" id="AT3G16420">
    <property type="gene designation" value="PBP1"/>
</dbReference>
<dbReference type="HOGENOM" id="CLU_019384_1_0_1"/>
<dbReference type="InParanoid" id="O04314"/>
<dbReference type="OMA" id="YERANAM"/>
<dbReference type="PhylomeDB" id="O04314"/>
<dbReference type="PRO" id="PR:O04314"/>
<dbReference type="Proteomes" id="UP000006548">
    <property type="component" value="Chromosome 3"/>
</dbReference>
<dbReference type="ExpressionAtlas" id="O04314">
    <property type="expression patterns" value="baseline and differential"/>
</dbReference>
<dbReference type="GO" id="GO:0005829">
    <property type="term" value="C:cytosol"/>
    <property type="evidence" value="ECO:0000314"/>
    <property type="project" value="TAIR"/>
</dbReference>
<dbReference type="GO" id="GO:0005634">
    <property type="term" value="C:nucleus"/>
    <property type="evidence" value="ECO:0007005"/>
    <property type="project" value="TAIR"/>
</dbReference>
<dbReference type="GO" id="GO:0009506">
    <property type="term" value="C:plasmodesma"/>
    <property type="evidence" value="ECO:0007005"/>
    <property type="project" value="TAIR"/>
</dbReference>
<dbReference type="GO" id="GO:0030246">
    <property type="term" value="F:carbohydrate binding"/>
    <property type="evidence" value="ECO:0007669"/>
    <property type="project" value="UniProtKB-KW"/>
</dbReference>
<dbReference type="GO" id="GO:0005507">
    <property type="term" value="F:copper ion binding"/>
    <property type="evidence" value="ECO:0007005"/>
    <property type="project" value="TAIR"/>
</dbReference>
<dbReference type="GO" id="GO:0030234">
    <property type="term" value="F:enzyme regulator activity"/>
    <property type="evidence" value="ECO:0000314"/>
    <property type="project" value="TAIR"/>
</dbReference>
<dbReference type="GO" id="GO:0006457">
    <property type="term" value="P:protein folding"/>
    <property type="evidence" value="ECO:0000304"/>
    <property type="project" value="TAIR"/>
</dbReference>
<dbReference type="GO" id="GO:0051336">
    <property type="term" value="P:regulation of hydrolase activity"/>
    <property type="evidence" value="ECO:0000314"/>
    <property type="project" value="TAIR"/>
</dbReference>
<dbReference type="CDD" id="cd09612">
    <property type="entry name" value="Jacalin"/>
    <property type="match status" value="2"/>
</dbReference>
<dbReference type="FunFam" id="2.100.10.30:FF:000001">
    <property type="entry name" value="Jacalin-related lectin 33"/>
    <property type="match status" value="2"/>
</dbReference>
<dbReference type="Gene3D" id="2.100.10.30">
    <property type="entry name" value="Jacalin-like lectin domain"/>
    <property type="match status" value="2"/>
</dbReference>
<dbReference type="InterPro" id="IPR001229">
    <property type="entry name" value="Jacalin-like_lectin_dom"/>
</dbReference>
<dbReference type="InterPro" id="IPR033734">
    <property type="entry name" value="Jacalin-like_lectin_dom_plant"/>
</dbReference>
<dbReference type="InterPro" id="IPR036404">
    <property type="entry name" value="Jacalin-like_lectin_dom_sf"/>
</dbReference>
<dbReference type="PANTHER" id="PTHR47293">
    <property type="entry name" value="JACALIN-RELATED LECTIN 3"/>
    <property type="match status" value="1"/>
</dbReference>
<dbReference type="PANTHER" id="PTHR47293:SF71">
    <property type="entry name" value="PYK10-BINDING PROTEIN 1-RELATED"/>
    <property type="match status" value="1"/>
</dbReference>
<dbReference type="Pfam" id="PF01419">
    <property type="entry name" value="Jacalin"/>
    <property type="match status" value="2"/>
</dbReference>
<dbReference type="SMART" id="SM00915">
    <property type="entry name" value="Jacalin"/>
    <property type="match status" value="2"/>
</dbReference>
<dbReference type="SUPFAM" id="SSF51101">
    <property type="entry name" value="Mannose-binding lectins"/>
    <property type="match status" value="2"/>
</dbReference>
<dbReference type="PROSITE" id="PS51752">
    <property type="entry name" value="JACALIN_LECTIN"/>
    <property type="match status" value="2"/>
</dbReference>
<accession>O04314</accession>
<accession>C0Z392</accession>
<accession>Q8L9J3</accession>
<keyword id="KW-0007">Acetylation</keyword>
<keyword id="KW-0025">Alternative splicing</keyword>
<keyword id="KW-0963">Cytoplasm</keyword>
<keyword id="KW-0430">Lectin</keyword>
<keyword id="KW-0597">Phosphoprotein</keyword>
<keyword id="KW-1185">Reference proteome</keyword>
<keyword id="KW-0677">Repeat</keyword>
<organism>
    <name type="scientific">Arabidopsis thaliana</name>
    <name type="common">Mouse-ear cress</name>
    <dbReference type="NCBI Taxonomy" id="3702"/>
    <lineage>
        <taxon>Eukaryota</taxon>
        <taxon>Viridiplantae</taxon>
        <taxon>Streptophyta</taxon>
        <taxon>Embryophyta</taxon>
        <taxon>Tracheophyta</taxon>
        <taxon>Spermatophyta</taxon>
        <taxon>Magnoliopsida</taxon>
        <taxon>eudicotyledons</taxon>
        <taxon>Gunneridae</taxon>
        <taxon>Pentapetalae</taxon>
        <taxon>rosids</taxon>
        <taxon>malvids</taxon>
        <taxon>Brassicales</taxon>
        <taxon>Brassicaceae</taxon>
        <taxon>Camelineae</taxon>
        <taxon>Arabidopsis</taxon>
    </lineage>
</organism>
<sequence length="298" mass="32158">MAQKVEAQGGKGANLWDDGSTHDAVTKIQLAAGIDGIQYVQFDYVKNGQPEQAPLRGTKGRVLPADPFVINHPDEHLVSVEGWYSPEGIIQGIKFISNKKTSDVIGSDEGTHFTLQVKDKKIIGFHGSAGGNLNSLGAYFAPLTTTTPLTPAKQLTAFGSDDGTVWDDGAYVGVKKVYVGQAQDGISAVKFVYDKSPEEVTGEEHGKSTLLGFEEFVLDYPSEYITAVDGTYDKIFGSDGSVITMLRFKTNKQTSPPFGLEAGTVFELKEEGHKIVGFHGRADVLLHKIGVHVRPLSN</sequence>
<protein>
    <recommendedName>
        <fullName>PYK10-binding protein 1</fullName>
    </recommendedName>
    <alternativeName>
        <fullName>Jacalin-related lectin 30</fullName>
    </alternativeName>
    <alternativeName>
        <fullName>Jasmonic acid-induced protein</fullName>
    </alternativeName>
</protein>
<name>JAL30_ARATH</name>
<evidence type="ECO:0000250" key="1">
    <source>
        <dbReference type="UniProtKB" id="Q9FGC5"/>
    </source>
</evidence>
<evidence type="ECO:0000255" key="2">
    <source>
        <dbReference type="PROSITE-ProRule" id="PRU01088"/>
    </source>
</evidence>
<evidence type="ECO:0000269" key="3">
    <source>
    </source>
</evidence>
<evidence type="ECO:0000269" key="4">
    <source>
    </source>
</evidence>
<evidence type="ECO:0000269" key="5">
    <source>
    </source>
</evidence>
<evidence type="ECO:0000269" key="6">
    <source>
    </source>
</evidence>
<evidence type="ECO:0000303" key="7">
    <source>
    </source>
</evidence>
<evidence type="ECO:0000305" key="8"/>
<evidence type="ECO:0007744" key="9">
    <source>
    </source>
</evidence>